<protein>
    <recommendedName>
        <fullName evidence="3 4">Peptide Ctri10033</fullName>
    </recommendedName>
</protein>
<reference key="1">
    <citation type="journal article" date="2013" name="Biomaterials">
        <title>Design of histidine-rich peptides with enhanced bioavailability and inhibitory activity against hepatitis C virus.</title>
        <authorList>
            <person name="Hong W."/>
            <person name="Zhang R."/>
            <person name="Di Z."/>
            <person name="He Y."/>
            <person name="Zhao Z."/>
            <person name="Hu J."/>
            <person name="Wu Y."/>
            <person name="Li W."/>
            <person name="Cao Z."/>
        </authorList>
    </citation>
    <scope>NUCLEOTIDE SEQUENCE [MRNA]</scope>
    <scope>SYNTHESIS OF 23-32</scope>
    <source>
        <tissue>Venom gland</tissue>
    </source>
</reference>
<reference key="2">
    <citation type="journal article" date="2012" name="J. Biol. Chem.">
        <title>Mucroporin-M1 inhibits hepatitis B virus replication by activating the mitogen-activated protein kinase (MAPK) pathway and down-regulating HNF4alpha in vitro and in vivo.</title>
        <authorList>
            <person name="Zhao Z."/>
            <person name="Hong W."/>
            <person name="Zeng Z."/>
            <person name="Wu Y."/>
            <person name="Hu K."/>
            <person name="Tian X."/>
            <person name="Li W."/>
            <person name="Cao Z."/>
        </authorList>
    </citation>
    <scope>SYNTHESIS OF 23-32</scope>
</reference>
<evidence type="ECO:0000250" key="1"/>
<evidence type="ECO:0000255" key="2"/>
<evidence type="ECO:0000303" key="3">
    <source>
    </source>
</evidence>
<evidence type="ECO:0000303" key="4">
    <source>
    </source>
</evidence>
<evidence type="ECO:0000305" key="5"/>
<evidence type="ECO:0000305" key="6">
    <source>
    </source>
</evidence>
<evidence type="ECO:0000305" key="7">
    <source>
    </source>
</evidence>
<comment type="subcellular location">
    <subcellularLocation>
        <location evidence="1">Secreted</location>
    </subcellularLocation>
</comment>
<comment type="tissue specificity">
    <text evidence="5">Expressed by the venom gland.</text>
</comment>
<comment type="miscellaneous">
    <text evidence="6 7">Shows a low ability to inhibit hepatitis C virus (HCV) infection in Huh7.5.1 cells (PubMed:23415044) and no ability to inhibit hepatitis B virus in HepG2.2.15 cells (PubMed:22791717).</text>
</comment>
<comment type="similarity">
    <text evidence="5">Belongs to the non-disulfide-bridged peptide (NDBP) superfamily. Short antimicrobial peptide (group 4) family.</text>
</comment>
<organism>
    <name type="scientific">Chaerilus tricostatus</name>
    <name type="common">Scorpion</name>
    <dbReference type="NCBI Taxonomy" id="1055734"/>
    <lineage>
        <taxon>Eukaryota</taxon>
        <taxon>Metazoa</taxon>
        <taxon>Ecdysozoa</taxon>
        <taxon>Arthropoda</taxon>
        <taxon>Chelicerata</taxon>
        <taxon>Arachnida</taxon>
        <taxon>Scorpiones</taxon>
        <taxon>Chaerilida</taxon>
        <taxon>Chaeriloidea</taxon>
        <taxon>Chaerilidae</taxon>
        <taxon>Chaerilus</taxon>
    </lineage>
</organism>
<proteinExistence type="inferred from homology"/>
<feature type="signal peptide" evidence="2">
    <location>
        <begin position="1"/>
        <end position="22"/>
    </location>
</feature>
<feature type="peptide" id="PRO_0000428681" description="Peptide Ctri10033">
    <location>
        <begin position="23"/>
        <end position="43"/>
    </location>
</feature>
<feature type="propeptide" id="PRO_0000428682" evidence="1">
    <location>
        <begin position="47"/>
        <end position="75"/>
    </location>
</feature>
<feature type="modified residue" description="Arginine amide" evidence="1">
    <location>
        <position position="43"/>
    </location>
</feature>
<dbReference type="SMR" id="P0DME4"/>
<dbReference type="GO" id="GO:0005576">
    <property type="term" value="C:extracellular region"/>
    <property type="evidence" value="ECO:0007669"/>
    <property type="project" value="UniProtKB-SubCell"/>
</dbReference>
<dbReference type="GO" id="GO:0050688">
    <property type="term" value="P:regulation of defense response to virus"/>
    <property type="evidence" value="ECO:0007669"/>
    <property type="project" value="UniProtKB-KW"/>
</dbReference>
<name>NDB4S_CHATC</name>
<keyword id="KW-0027">Amidation</keyword>
<keyword id="KW-0929">Antimicrobial</keyword>
<keyword id="KW-0930">Antiviral protein</keyword>
<keyword id="KW-0964">Secreted</keyword>
<keyword id="KW-0732">Signal</keyword>
<sequence length="75" mass="8972">MNSKYLFVFLILIVTFTDLCQGFLVGILPRMRGFITPFLKKVRGRRELGSQYDYLQDFRKRELDLDDLLSKFPDY</sequence>
<accession>P0DME4</accession>